<organism>
    <name type="scientific">Shigella sonnei (strain Ss046)</name>
    <dbReference type="NCBI Taxonomy" id="300269"/>
    <lineage>
        <taxon>Bacteria</taxon>
        <taxon>Pseudomonadati</taxon>
        <taxon>Pseudomonadota</taxon>
        <taxon>Gammaproteobacteria</taxon>
        <taxon>Enterobacterales</taxon>
        <taxon>Enterobacteriaceae</taxon>
        <taxon>Shigella</taxon>
    </lineage>
</organism>
<comment type="similarity">
    <text evidence="1">Belongs to the UPF0246 family.</text>
</comment>
<accession>Q3Z608</accession>
<name>YAAA_SHISS</name>
<keyword id="KW-1185">Reference proteome</keyword>
<sequence>MLILISPAKTLDYQSPLTTTRYTLPELLDNSQHLIHEARKLTPPQISTLMRISDKLAGINAARFHDWQPDFTPENARQAILAFKGDVYTGLQAETFSEDDFDFAQQHLRMLSGLYGVLRPLDLMQPYRLEMGIRLENARGKDLYQFWGDIITNKLNEALAAQGDNVVINLASDEYFKSVKPKKLNAEIIKPVFLDEKNGKFKIISFYAKKARGLMSRFIIENRLTKPEQLTGFNSEGYFFDEASSSNGELVFKRYEQR</sequence>
<dbReference type="EMBL" id="CP000038">
    <property type="protein sequence ID" value="AAZ86804.1"/>
    <property type="molecule type" value="Genomic_DNA"/>
</dbReference>
<dbReference type="RefSeq" id="WP_000906191.1">
    <property type="nucleotide sequence ID" value="NC_007384.1"/>
</dbReference>
<dbReference type="SMR" id="Q3Z608"/>
<dbReference type="GeneID" id="93777436"/>
<dbReference type="KEGG" id="ssn:SSON_0006"/>
<dbReference type="HOGENOM" id="CLU_061989_0_0_6"/>
<dbReference type="Proteomes" id="UP000002529">
    <property type="component" value="Chromosome"/>
</dbReference>
<dbReference type="GO" id="GO:0005829">
    <property type="term" value="C:cytosol"/>
    <property type="evidence" value="ECO:0007669"/>
    <property type="project" value="TreeGrafter"/>
</dbReference>
<dbReference type="GO" id="GO:0033194">
    <property type="term" value="P:response to hydroperoxide"/>
    <property type="evidence" value="ECO:0007669"/>
    <property type="project" value="TreeGrafter"/>
</dbReference>
<dbReference type="HAMAP" id="MF_00652">
    <property type="entry name" value="UPF0246"/>
    <property type="match status" value="1"/>
</dbReference>
<dbReference type="InterPro" id="IPR005583">
    <property type="entry name" value="YaaA"/>
</dbReference>
<dbReference type="NCBIfam" id="NF002541">
    <property type="entry name" value="PRK02101.1-1"/>
    <property type="match status" value="1"/>
</dbReference>
<dbReference type="NCBIfam" id="NF002542">
    <property type="entry name" value="PRK02101.1-3"/>
    <property type="match status" value="1"/>
</dbReference>
<dbReference type="PANTHER" id="PTHR30283:SF4">
    <property type="entry name" value="PEROXIDE STRESS RESISTANCE PROTEIN YAAA"/>
    <property type="match status" value="1"/>
</dbReference>
<dbReference type="PANTHER" id="PTHR30283">
    <property type="entry name" value="PEROXIDE STRESS RESPONSE PROTEIN YAAA"/>
    <property type="match status" value="1"/>
</dbReference>
<dbReference type="Pfam" id="PF03883">
    <property type="entry name" value="H2O2_YaaD"/>
    <property type="match status" value="1"/>
</dbReference>
<feature type="chain" id="PRO_0000262062" description="UPF0246 protein YaaA">
    <location>
        <begin position="1"/>
        <end position="258"/>
    </location>
</feature>
<protein>
    <recommendedName>
        <fullName evidence="1">UPF0246 protein YaaA</fullName>
    </recommendedName>
</protein>
<evidence type="ECO:0000255" key="1">
    <source>
        <dbReference type="HAMAP-Rule" id="MF_00652"/>
    </source>
</evidence>
<proteinExistence type="inferred from homology"/>
<gene>
    <name evidence="1" type="primary">yaaA</name>
    <name type="ordered locus">SSON_0006</name>
</gene>
<reference key="1">
    <citation type="journal article" date="2005" name="Nucleic Acids Res.">
        <title>Genome dynamics and diversity of Shigella species, the etiologic agents of bacillary dysentery.</title>
        <authorList>
            <person name="Yang F."/>
            <person name="Yang J."/>
            <person name="Zhang X."/>
            <person name="Chen L."/>
            <person name="Jiang Y."/>
            <person name="Yan Y."/>
            <person name="Tang X."/>
            <person name="Wang J."/>
            <person name="Xiong Z."/>
            <person name="Dong J."/>
            <person name="Xue Y."/>
            <person name="Zhu Y."/>
            <person name="Xu X."/>
            <person name="Sun L."/>
            <person name="Chen S."/>
            <person name="Nie H."/>
            <person name="Peng J."/>
            <person name="Xu J."/>
            <person name="Wang Y."/>
            <person name="Yuan Z."/>
            <person name="Wen Y."/>
            <person name="Yao Z."/>
            <person name="Shen Y."/>
            <person name="Qiang B."/>
            <person name="Hou Y."/>
            <person name="Yu J."/>
            <person name="Jin Q."/>
        </authorList>
    </citation>
    <scope>NUCLEOTIDE SEQUENCE [LARGE SCALE GENOMIC DNA]</scope>
    <source>
        <strain>Ss046</strain>
    </source>
</reference>